<name>TORA_ECOL6</name>
<proteinExistence type="inferred from homology"/>
<keyword id="KW-0479">Metal-binding</keyword>
<keyword id="KW-0500">Molybdenum</keyword>
<keyword id="KW-0560">Oxidoreductase</keyword>
<keyword id="KW-0574">Periplasm</keyword>
<keyword id="KW-1185">Reference proteome</keyword>
<keyword id="KW-0732">Signal</keyword>
<feature type="signal peptide" description="Tat-type signal" evidence="2">
    <location>
        <begin position="1"/>
        <end position="39"/>
    </location>
</feature>
<feature type="chain" id="PRO_0000019152" description="Trimethylamine-N-oxide reductase 1">
    <location>
        <begin position="40"/>
        <end position="848"/>
    </location>
</feature>
<feature type="binding site" evidence="1">
    <location>
        <position position="191"/>
    </location>
    <ligand>
        <name>Mo-bis(molybdopterin guanine dinucleotide)</name>
        <dbReference type="ChEBI" id="CHEBI:60539"/>
    </ligand>
    <ligandPart>
        <name>Mo</name>
        <dbReference type="ChEBI" id="CHEBI:28685"/>
    </ligandPart>
</feature>
<comment type="function">
    <text evidence="1">Reduces trimethylamine-N-oxide (TMAO) into trimethylamine; an anaerobic reaction coupled to energy-yielding reactions.</text>
</comment>
<comment type="catalytic activity">
    <reaction>
        <text>trimethylamine + 2 Fe(III)-[cytochrome c] + H2O = trimethylamine N-oxide + 2 Fe(II)-[cytochrome c] + 3 H(+)</text>
        <dbReference type="Rhea" id="RHEA:24236"/>
        <dbReference type="Rhea" id="RHEA-COMP:10350"/>
        <dbReference type="Rhea" id="RHEA-COMP:14399"/>
        <dbReference type="ChEBI" id="CHEBI:15377"/>
        <dbReference type="ChEBI" id="CHEBI:15378"/>
        <dbReference type="ChEBI" id="CHEBI:15724"/>
        <dbReference type="ChEBI" id="CHEBI:29033"/>
        <dbReference type="ChEBI" id="CHEBI:29034"/>
        <dbReference type="ChEBI" id="CHEBI:58389"/>
        <dbReference type="EC" id="1.7.2.3"/>
    </reaction>
</comment>
<comment type="cofactor">
    <cofactor evidence="1">
        <name>Mo-bis(molybdopterin guanine dinucleotide)</name>
        <dbReference type="ChEBI" id="CHEBI:60539"/>
    </cofactor>
    <text evidence="1">Binds 1 molybdenum-bis(molybdopterin guanine dinucleotide) (Mo-bis-MGD) cofactor per subunit.</text>
</comment>
<comment type="subcellular location">
    <subcellularLocation>
        <location evidence="1">Periplasm</location>
    </subcellularLocation>
</comment>
<comment type="PTM">
    <text>Predicted to be exported by the Tat system. The position of the signal peptide cleavage has not been experimentally proven.</text>
</comment>
<comment type="similarity">
    <text evidence="3">Belongs to the prokaryotic molybdopterin-containing oxidoreductase family.</text>
</comment>
<evidence type="ECO:0000250" key="1"/>
<evidence type="ECO:0000255" key="2">
    <source>
        <dbReference type="PROSITE-ProRule" id="PRU00648"/>
    </source>
</evidence>
<evidence type="ECO:0000305" key="3"/>
<sequence length="848" mass="94628">MNNNDLFQASRRRFLAQLGGLTVAGMLGTSLLTPRRATAAQAATEAVISKEGILTGSHWGAIRATVKDGRFVAAKPFELDKYPSKMIAGLPDHVHNAARIRYPMVRVDWLRKRHLSDTSQRGDNRFVRVSWDEALDMFYEELERVQKTHGPSALLTASGWQSTGMFHNASGMLAKAIALHGNSVGTGGDYSTGAAQVILPRVVGSMEVYEQQTSWPLVLQNSKTIVLWGSDLLKNQQANWWCPDHDVYEYYEQLKAKVAAGEIEVISIDPVVTSTHEYLGREHVKHIAVNPQTDVPLQLALAHTLYSENLYDKNFLANYCVGFEQFLPYLLGEKDGQPKDAAWAEKLTGIDAETIRGLARQMAANRTQIIAGWCVQRMQHGEQWAWMIVVLAAMLGQIGLPGGGFGFGWHYNGAGTPGRKGVILSGFSGSTSIPPVHDNSDYKGYSSTIPIARFIDAILEPGKVINWNGKSVKLPPLKMCIFAGTNPFHRHQQINRIIEGWRKLETVIAIDNQWTSTCRFADIVLPATTQFERNDLDQYGNHSNRGIIAMKQVVPPQFEARNDFDIFRELCRRFNREEAFTEGLDEMGWLKRIWQEGVQQGKGRGVHLPAFNDFWNNKEYVEFDHPQMFVRHQAFREDPDLEPLGTPSGLIEIYSKTIADMNYDDCQGHPMWFEKIERSHGGPGSQKYPLHLQSVHPDFRLHSQLCESETLRQQYTVAGKEPVFISPKDASARGIRHGDVVRVFNVRGQVLAGAVVSDRYAPGVARIHEGAWYDPDKGGEPGALCKYGNPNVLTIDIGTSQLAQATSAHTTLVEIEKYNGTVEQVTAFNGPVEMVAQCEYVPASQVKS</sequence>
<dbReference type="EC" id="1.7.2.3"/>
<dbReference type="EMBL" id="AE014075">
    <property type="protein sequence ID" value="AAN79601.1"/>
    <property type="molecule type" value="Genomic_DNA"/>
</dbReference>
<dbReference type="RefSeq" id="WP_001063183.1">
    <property type="nucleotide sequence ID" value="NZ_CP051263.1"/>
</dbReference>
<dbReference type="SMR" id="Q8CW73"/>
<dbReference type="STRING" id="199310.c1133"/>
<dbReference type="KEGG" id="ecc:c1133"/>
<dbReference type="eggNOG" id="COG0243">
    <property type="taxonomic scope" value="Bacteria"/>
</dbReference>
<dbReference type="HOGENOM" id="CLU_000422_13_3_6"/>
<dbReference type="BioCyc" id="ECOL199310:C1133-MONOMER"/>
<dbReference type="Proteomes" id="UP000001410">
    <property type="component" value="Chromosome"/>
</dbReference>
<dbReference type="GO" id="GO:0030288">
    <property type="term" value="C:outer membrane-bounded periplasmic space"/>
    <property type="evidence" value="ECO:0007669"/>
    <property type="project" value="TreeGrafter"/>
</dbReference>
<dbReference type="GO" id="GO:0009055">
    <property type="term" value="F:electron transfer activity"/>
    <property type="evidence" value="ECO:0007669"/>
    <property type="project" value="TreeGrafter"/>
</dbReference>
<dbReference type="GO" id="GO:0030151">
    <property type="term" value="F:molybdenum ion binding"/>
    <property type="evidence" value="ECO:0007669"/>
    <property type="project" value="InterPro"/>
</dbReference>
<dbReference type="GO" id="GO:0043546">
    <property type="term" value="F:molybdopterin cofactor binding"/>
    <property type="evidence" value="ECO:0007669"/>
    <property type="project" value="InterPro"/>
</dbReference>
<dbReference type="GO" id="GO:0050626">
    <property type="term" value="F:trimethylamine-N-oxide reductase (cytochrome c) activity"/>
    <property type="evidence" value="ECO:0007669"/>
    <property type="project" value="UniProtKB-EC"/>
</dbReference>
<dbReference type="GO" id="GO:0009061">
    <property type="term" value="P:anaerobic respiration"/>
    <property type="evidence" value="ECO:0007669"/>
    <property type="project" value="TreeGrafter"/>
</dbReference>
<dbReference type="CDD" id="cd02793">
    <property type="entry name" value="MopB_CT_DMSOR-BSOR-TMAOR"/>
    <property type="match status" value="1"/>
</dbReference>
<dbReference type="CDD" id="cd02769">
    <property type="entry name" value="MopB_DMSOR-BSOR-TMAOR"/>
    <property type="match status" value="1"/>
</dbReference>
<dbReference type="FunFam" id="2.40.40.20:FF:000009">
    <property type="entry name" value="Biotin sulfoxide reductase 2"/>
    <property type="match status" value="1"/>
</dbReference>
<dbReference type="FunFam" id="3.40.228.10:FF:000003">
    <property type="entry name" value="Biotin sulfoxide reductase 2"/>
    <property type="match status" value="1"/>
</dbReference>
<dbReference type="Gene3D" id="2.40.40.20">
    <property type="match status" value="1"/>
</dbReference>
<dbReference type="Gene3D" id="3.40.50.740">
    <property type="match status" value="1"/>
</dbReference>
<dbReference type="Gene3D" id="3.40.228.10">
    <property type="entry name" value="Dimethylsulfoxide Reductase, domain 2"/>
    <property type="match status" value="1"/>
</dbReference>
<dbReference type="Gene3D" id="3.90.55.10">
    <property type="entry name" value="Dimethylsulfoxide Reductase, domain 3"/>
    <property type="match status" value="1"/>
</dbReference>
<dbReference type="InterPro" id="IPR009010">
    <property type="entry name" value="Asp_de-COase-like_dom_sf"/>
</dbReference>
<dbReference type="InterPro" id="IPR006658">
    <property type="entry name" value="BisC"/>
</dbReference>
<dbReference type="InterPro" id="IPR041954">
    <property type="entry name" value="CT_DMSOR/BSOR/TMAOR"/>
</dbReference>
<dbReference type="InterPro" id="IPR041460">
    <property type="entry name" value="Molybdopterin_N"/>
</dbReference>
<dbReference type="InterPro" id="IPR006657">
    <property type="entry name" value="MoPterin_dinucl-bd_dom"/>
</dbReference>
<dbReference type="InterPro" id="IPR006656">
    <property type="entry name" value="Mopterin_OxRdtase"/>
</dbReference>
<dbReference type="InterPro" id="IPR006655">
    <property type="entry name" value="Mopterin_OxRdtase_prok_CS"/>
</dbReference>
<dbReference type="InterPro" id="IPR050612">
    <property type="entry name" value="Prok_Mopterin_Oxidored"/>
</dbReference>
<dbReference type="InterPro" id="IPR006311">
    <property type="entry name" value="TAT_signal"/>
</dbReference>
<dbReference type="InterPro" id="IPR011887">
    <property type="entry name" value="TorA"/>
</dbReference>
<dbReference type="NCBIfam" id="TIGR00509">
    <property type="entry name" value="bisC_fam"/>
    <property type="match status" value="1"/>
</dbReference>
<dbReference type="NCBIfam" id="NF011682">
    <property type="entry name" value="PRK15102.1"/>
    <property type="match status" value="1"/>
</dbReference>
<dbReference type="NCBIfam" id="TIGR02164">
    <property type="entry name" value="torA"/>
    <property type="match status" value="1"/>
</dbReference>
<dbReference type="PANTHER" id="PTHR43742">
    <property type="entry name" value="TRIMETHYLAMINE-N-OXIDE REDUCTASE"/>
    <property type="match status" value="1"/>
</dbReference>
<dbReference type="PANTHER" id="PTHR43742:SF4">
    <property type="entry name" value="TRIMETHYLAMINE-N-OXIDE REDUCTASE 1"/>
    <property type="match status" value="1"/>
</dbReference>
<dbReference type="Pfam" id="PF00384">
    <property type="entry name" value="Molybdopterin"/>
    <property type="match status" value="1"/>
</dbReference>
<dbReference type="Pfam" id="PF18364">
    <property type="entry name" value="Molybdopterin_N"/>
    <property type="match status" value="1"/>
</dbReference>
<dbReference type="Pfam" id="PF01568">
    <property type="entry name" value="Molydop_binding"/>
    <property type="match status" value="1"/>
</dbReference>
<dbReference type="SUPFAM" id="SSF50692">
    <property type="entry name" value="ADC-like"/>
    <property type="match status" value="1"/>
</dbReference>
<dbReference type="SUPFAM" id="SSF53706">
    <property type="entry name" value="Formate dehydrogenase/DMSO reductase, domains 1-3"/>
    <property type="match status" value="1"/>
</dbReference>
<dbReference type="PROSITE" id="PS00490">
    <property type="entry name" value="MOLYBDOPTERIN_PROK_2"/>
    <property type="match status" value="1"/>
</dbReference>
<dbReference type="PROSITE" id="PS00932">
    <property type="entry name" value="MOLYBDOPTERIN_PROK_3"/>
    <property type="match status" value="1"/>
</dbReference>
<dbReference type="PROSITE" id="PS51318">
    <property type="entry name" value="TAT"/>
    <property type="match status" value="1"/>
</dbReference>
<protein>
    <recommendedName>
        <fullName>Trimethylamine-N-oxide reductase 1</fullName>
        <shortName>TMAO reductase 1</shortName>
        <shortName>Trimethylamine oxidase 1</shortName>
        <ecNumber>1.7.2.3</ecNumber>
    </recommendedName>
</protein>
<organism>
    <name type="scientific">Escherichia coli O6:H1 (strain CFT073 / ATCC 700928 / UPEC)</name>
    <dbReference type="NCBI Taxonomy" id="199310"/>
    <lineage>
        <taxon>Bacteria</taxon>
        <taxon>Pseudomonadati</taxon>
        <taxon>Pseudomonadota</taxon>
        <taxon>Gammaproteobacteria</taxon>
        <taxon>Enterobacterales</taxon>
        <taxon>Enterobacteriaceae</taxon>
        <taxon>Escherichia</taxon>
    </lineage>
</organism>
<gene>
    <name type="primary">torA</name>
    <name type="ordered locus">c1133</name>
</gene>
<reference key="1">
    <citation type="journal article" date="2002" name="Proc. Natl. Acad. Sci. U.S.A.">
        <title>Extensive mosaic structure revealed by the complete genome sequence of uropathogenic Escherichia coli.</title>
        <authorList>
            <person name="Welch R.A."/>
            <person name="Burland V."/>
            <person name="Plunkett G. III"/>
            <person name="Redford P."/>
            <person name="Roesch P."/>
            <person name="Rasko D."/>
            <person name="Buckles E.L."/>
            <person name="Liou S.-R."/>
            <person name="Boutin A."/>
            <person name="Hackett J."/>
            <person name="Stroud D."/>
            <person name="Mayhew G.F."/>
            <person name="Rose D.J."/>
            <person name="Zhou S."/>
            <person name="Schwartz D.C."/>
            <person name="Perna N.T."/>
            <person name="Mobley H.L.T."/>
            <person name="Donnenberg M.S."/>
            <person name="Blattner F.R."/>
        </authorList>
    </citation>
    <scope>NUCLEOTIDE SEQUENCE [LARGE SCALE GENOMIC DNA]</scope>
    <source>
        <strain>CFT073 / ATCC 700928 / UPEC</strain>
    </source>
</reference>
<accession>Q8CW73</accession>